<protein>
    <recommendedName>
        <fullName evidence="1">Small ribosomal subunit protein uS4</fullName>
    </recommendedName>
    <alternativeName>
        <fullName evidence="3">30S ribosomal protein S4</fullName>
    </alternativeName>
</protein>
<comment type="function">
    <text evidence="1">One of the primary rRNA binding proteins, it binds directly to 16S rRNA where it nucleates assembly of the body of the 30S subunit.</text>
</comment>
<comment type="function">
    <text evidence="1">With S5 and S12 plays an important role in translational accuracy.</text>
</comment>
<comment type="subunit">
    <text evidence="1">Part of the 30S ribosomal subunit. Contacts protein S5. The interaction surface between S4 and S5 is involved in control of translational fidelity.</text>
</comment>
<comment type="similarity">
    <text evidence="1">Belongs to the universal ribosomal protein uS4 family.</text>
</comment>
<evidence type="ECO:0000255" key="1">
    <source>
        <dbReference type="HAMAP-Rule" id="MF_01306"/>
    </source>
</evidence>
<evidence type="ECO:0000256" key="2">
    <source>
        <dbReference type="SAM" id="MobiDB-lite"/>
    </source>
</evidence>
<evidence type="ECO:0000305" key="3"/>
<name>RS4_META3</name>
<sequence>MGDPRRLSKTYDTPNHPWIGERIKQERELSNKYGLSNKKEIWKMETRLRTFRRQARKLISDTSAQGEKEAVQLFGILNRYGILLKEDATLDDVLSLNLESILERRLQTLVFRKGLANTPKQARQFIVHGHIAVNGKKINAPSYLVPLVEEDAISYMPNSPMASESHPERTDSVKDAE</sequence>
<gene>
    <name evidence="1" type="primary">rps4</name>
    <name type="ordered locus">Maeo_1100</name>
</gene>
<feature type="chain" id="PRO_0000322357" description="Small ribosomal subunit protein uS4">
    <location>
        <begin position="1"/>
        <end position="177"/>
    </location>
</feature>
<feature type="domain" description="S4 RNA-binding" evidence="1">
    <location>
        <begin position="104"/>
        <end position="168"/>
    </location>
</feature>
<feature type="region of interest" description="Disordered" evidence="2">
    <location>
        <begin position="157"/>
        <end position="177"/>
    </location>
</feature>
<feature type="compositionally biased region" description="Basic and acidic residues" evidence="2">
    <location>
        <begin position="165"/>
        <end position="177"/>
    </location>
</feature>
<accession>A6UW05</accession>
<keyword id="KW-0687">Ribonucleoprotein</keyword>
<keyword id="KW-0689">Ribosomal protein</keyword>
<keyword id="KW-0694">RNA-binding</keyword>
<keyword id="KW-0699">rRNA-binding</keyword>
<reference key="1">
    <citation type="submission" date="2007-06" db="EMBL/GenBank/DDBJ databases">
        <title>Complete sequence of Methanococcus aeolicus Nankai-3.</title>
        <authorList>
            <consortium name="US DOE Joint Genome Institute"/>
            <person name="Copeland A."/>
            <person name="Lucas S."/>
            <person name="Lapidus A."/>
            <person name="Barry K."/>
            <person name="Glavina del Rio T."/>
            <person name="Dalin E."/>
            <person name="Tice H."/>
            <person name="Pitluck S."/>
            <person name="Chain P."/>
            <person name="Malfatti S."/>
            <person name="Shin M."/>
            <person name="Vergez L."/>
            <person name="Schmutz J."/>
            <person name="Larimer F."/>
            <person name="Land M."/>
            <person name="Hauser L."/>
            <person name="Kyrpides N."/>
            <person name="Lykidis A."/>
            <person name="Sieprawska-Lupa M."/>
            <person name="Whitman W.B."/>
            <person name="Richardson P."/>
        </authorList>
    </citation>
    <scope>NUCLEOTIDE SEQUENCE [LARGE SCALE GENOMIC DNA]</scope>
    <source>
        <strain>ATCC BAA-1280 / DSM 17508 / OCM 812 / Nankai-3</strain>
    </source>
</reference>
<proteinExistence type="inferred from homology"/>
<dbReference type="EMBL" id="CP000743">
    <property type="protein sequence ID" value="ABR56677.1"/>
    <property type="molecule type" value="Genomic_DNA"/>
</dbReference>
<dbReference type="RefSeq" id="WP_011973809.1">
    <property type="nucleotide sequence ID" value="NC_009635.1"/>
</dbReference>
<dbReference type="SMR" id="A6UW05"/>
<dbReference type="STRING" id="419665.Maeo_1100"/>
<dbReference type="GeneID" id="5327744"/>
<dbReference type="KEGG" id="mae:Maeo_1100"/>
<dbReference type="eggNOG" id="arCOG04239">
    <property type="taxonomic scope" value="Archaea"/>
</dbReference>
<dbReference type="HOGENOM" id="CLU_089738_1_1_2"/>
<dbReference type="OrthoDB" id="10429at2157"/>
<dbReference type="Proteomes" id="UP000001106">
    <property type="component" value="Chromosome"/>
</dbReference>
<dbReference type="GO" id="GO:0015935">
    <property type="term" value="C:small ribosomal subunit"/>
    <property type="evidence" value="ECO:0007669"/>
    <property type="project" value="InterPro"/>
</dbReference>
<dbReference type="GO" id="GO:0019843">
    <property type="term" value="F:rRNA binding"/>
    <property type="evidence" value="ECO:0007669"/>
    <property type="project" value="UniProtKB-UniRule"/>
</dbReference>
<dbReference type="GO" id="GO:0003735">
    <property type="term" value="F:structural constituent of ribosome"/>
    <property type="evidence" value="ECO:0007669"/>
    <property type="project" value="InterPro"/>
</dbReference>
<dbReference type="GO" id="GO:0042274">
    <property type="term" value="P:ribosomal small subunit biogenesis"/>
    <property type="evidence" value="ECO:0007669"/>
    <property type="project" value="TreeGrafter"/>
</dbReference>
<dbReference type="GO" id="GO:0006412">
    <property type="term" value="P:translation"/>
    <property type="evidence" value="ECO:0007669"/>
    <property type="project" value="UniProtKB-UniRule"/>
</dbReference>
<dbReference type="CDD" id="cd00165">
    <property type="entry name" value="S4"/>
    <property type="match status" value="1"/>
</dbReference>
<dbReference type="Gene3D" id="1.10.1050.10">
    <property type="entry name" value="Ribosomal Protein S4 Delta 41, Chain A, domain 1"/>
    <property type="match status" value="1"/>
</dbReference>
<dbReference type="Gene3D" id="3.10.290.10">
    <property type="entry name" value="RNA-binding S4 domain"/>
    <property type="match status" value="1"/>
</dbReference>
<dbReference type="HAMAP" id="MF_01306_A">
    <property type="entry name" value="Ribosomal_uS4_A"/>
    <property type="match status" value="1"/>
</dbReference>
<dbReference type="InterPro" id="IPR022801">
    <property type="entry name" value="Ribosomal_uS4"/>
</dbReference>
<dbReference type="InterPro" id="IPR022802">
    <property type="entry name" value="Ribosomal_uS4_arc"/>
</dbReference>
<dbReference type="InterPro" id="IPR018079">
    <property type="entry name" value="Ribosomal_uS4_CS"/>
</dbReference>
<dbReference type="InterPro" id="IPR005710">
    <property type="entry name" value="Ribosomal_uS4_euk/arc"/>
</dbReference>
<dbReference type="InterPro" id="IPR001912">
    <property type="entry name" value="Ribosomal_uS4_N"/>
</dbReference>
<dbReference type="InterPro" id="IPR002942">
    <property type="entry name" value="S4_RNA-bd"/>
</dbReference>
<dbReference type="InterPro" id="IPR036986">
    <property type="entry name" value="S4_RNA-bd_sf"/>
</dbReference>
<dbReference type="NCBIfam" id="NF003139">
    <property type="entry name" value="PRK04051.1"/>
    <property type="match status" value="1"/>
</dbReference>
<dbReference type="NCBIfam" id="TIGR01018">
    <property type="entry name" value="uS4_arch"/>
    <property type="match status" value="1"/>
</dbReference>
<dbReference type="PANTHER" id="PTHR11831">
    <property type="entry name" value="30S 40S RIBOSOMAL PROTEIN"/>
    <property type="match status" value="1"/>
</dbReference>
<dbReference type="PANTHER" id="PTHR11831:SF5">
    <property type="entry name" value="40S RIBOSOMAL PROTEIN S9"/>
    <property type="match status" value="1"/>
</dbReference>
<dbReference type="Pfam" id="PF01479">
    <property type="entry name" value="S4"/>
    <property type="match status" value="1"/>
</dbReference>
<dbReference type="SMART" id="SM01390">
    <property type="entry name" value="Ribosomal_S4"/>
    <property type="match status" value="1"/>
</dbReference>
<dbReference type="SMART" id="SM00363">
    <property type="entry name" value="S4"/>
    <property type="match status" value="1"/>
</dbReference>
<dbReference type="SUPFAM" id="SSF55174">
    <property type="entry name" value="Alpha-L RNA-binding motif"/>
    <property type="match status" value="1"/>
</dbReference>
<dbReference type="PROSITE" id="PS00632">
    <property type="entry name" value="RIBOSOMAL_S4"/>
    <property type="match status" value="1"/>
</dbReference>
<dbReference type="PROSITE" id="PS50889">
    <property type="entry name" value="S4"/>
    <property type="match status" value="1"/>
</dbReference>
<organism>
    <name type="scientific">Methanococcus aeolicus (strain ATCC BAA-1280 / DSM 17508 / OCM 812 / Nankai-3)</name>
    <dbReference type="NCBI Taxonomy" id="419665"/>
    <lineage>
        <taxon>Archaea</taxon>
        <taxon>Methanobacteriati</taxon>
        <taxon>Methanobacteriota</taxon>
        <taxon>Methanomada group</taxon>
        <taxon>Methanococci</taxon>
        <taxon>Methanococcales</taxon>
        <taxon>Methanococcaceae</taxon>
        <taxon>Methanococcus</taxon>
    </lineage>
</organism>